<reference key="1">
    <citation type="journal article" date="2002" name="Proc. Natl. Acad. Sci. U.S.A.">
        <title>The genome sequence of Bifidobacterium longum reflects its adaptation to the human gastrointestinal tract.</title>
        <authorList>
            <person name="Schell M.A."/>
            <person name="Karmirantzou M."/>
            <person name="Snel B."/>
            <person name="Vilanova D."/>
            <person name="Berger B."/>
            <person name="Pessi G."/>
            <person name="Zwahlen M.-C."/>
            <person name="Desiere F."/>
            <person name="Bork P."/>
            <person name="Delley M."/>
            <person name="Pridmore R.D."/>
            <person name="Arigoni F."/>
        </authorList>
    </citation>
    <scope>NUCLEOTIDE SEQUENCE [LARGE SCALE GENOMIC DNA]</scope>
    <source>
        <strain>NCC 2705</strain>
    </source>
</reference>
<organism>
    <name type="scientific">Bifidobacterium longum (strain NCC 2705)</name>
    <dbReference type="NCBI Taxonomy" id="206672"/>
    <lineage>
        <taxon>Bacteria</taxon>
        <taxon>Bacillati</taxon>
        <taxon>Actinomycetota</taxon>
        <taxon>Actinomycetes</taxon>
        <taxon>Bifidobacteriales</taxon>
        <taxon>Bifidobacteriaceae</taxon>
        <taxon>Bifidobacterium</taxon>
    </lineage>
</organism>
<name>LEUD_BIFLO</name>
<sequence>MEKLTTLTGVGVPLRRSNVDTDQIIPAVFLKRVTKSGFDDALFYAWRRDPNFVLNKPEYAGKGQILVAGPEFGIGSSREHAVWALHDYGFRVVIAPSFADIFYGNTAKNGVLAAIMPQESVELLWKLLEEEPGREMTVSLETRTVTCGDVTLPFEVNDYVRWRLMNGYDDIDLTLQHEDDIAAYEKMRAEKFPFKPKTIPAKHWAEERIESAREPEDADWTGPLADRGII</sequence>
<dbReference type="EC" id="4.2.1.33" evidence="1"/>
<dbReference type="EMBL" id="AE014295">
    <property type="protein sequence ID" value="AAN25064.1"/>
    <property type="molecule type" value="Genomic_DNA"/>
</dbReference>
<dbReference type="RefSeq" id="NP_696428.1">
    <property type="nucleotide sequence ID" value="NC_004307.2"/>
</dbReference>
<dbReference type="RefSeq" id="WP_007053083.1">
    <property type="nucleotide sequence ID" value="NC_004307.2"/>
</dbReference>
<dbReference type="SMR" id="Q8G4W1"/>
<dbReference type="STRING" id="206672.BL1263"/>
<dbReference type="EnsemblBacteria" id="AAN25064">
    <property type="protein sequence ID" value="AAN25064"/>
    <property type="gene ID" value="BL1263"/>
</dbReference>
<dbReference type="GeneID" id="69578988"/>
<dbReference type="KEGG" id="blo:BL1263"/>
<dbReference type="PATRIC" id="fig|206672.9.peg.1549"/>
<dbReference type="HOGENOM" id="CLU_081378_0_1_11"/>
<dbReference type="OrthoDB" id="9777465at2"/>
<dbReference type="PhylomeDB" id="Q8G4W1"/>
<dbReference type="UniPathway" id="UPA00048">
    <property type="reaction ID" value="UER00071"/>
</dbReference>
<dbReference type="Proteomes" id="UP000000439">
    <property type="component" value="Chromosome"/>
</dbReference>
<dbReference type="GO" id="GO:0009316">
    <property type="term" value="C:3-isopropylmalate dehydratase complex"/>
    <property type="evidence" value="ECO:0007669"/>
    <property type="project" value="InterPro"/>
</dbReference>
<dbReference type="GO" id="GO:0003861">
    <property type="term" value="F:3-isopropylmalate dehydratase activity"/>
    <property type="evidence" value="ECO:0007669"/>
    <property type="project" value="UniProtKB-UniRule"/>
</dbReference>
<dbReference type="GO" id="GO:0009098">
    <property type="term" value="P:L-leucine biosynthetic process"/>
    <property type="evidence" value="ECO:0007669"/>
    <property type="project" value="UniProtKB-UniRule"/>
</dbReference>
<dbReference type="CDD" id="cd01577">
    <property type="entry name" value="IPMI_Swivel"/>
    <property type="match status" value="1"/>
</dbReference>
<dbReference type="FunFam" id="3.20.19.10:FF:000003">
    <property type="entry name" value="3-isopropylmalate dehydratase small subunit"/>
    <property type="match status" value="1"/>
</dbReference>
<dbReference type="Gene3D" id="3.20.19.10">
    <property type="entry name" value="Aconitase, domain 4"/>
    <property type="match status" value="1"/>
</dbReference>
<dbReference type="HAMAP" id="MF_01031">
    <property type="entry name" value="LeuD_type1"/>
    <property type="match status" value="1"/>
</dbReference>
<dbReference type="InterPro" id="IPR004431">
    <property type="entry name" value="3-IsopropMal_deHydase_ssu"/>
</dbReference>
<dbReference type="InterPro" id="IPR015928">
    <property type="entry name" value="Aconitase/3IPM_dehydase_swvl"/>
</dbReference>
<dbReference type="InterPro" id="IPR000573">
    <property type="entry name" value="AconitaseA/IPMdHydase_ssu_swvl"/>
</dbReference>
<dbReference type="InterPro" id="IPR033940">
    <property type="entry name" value="IPMI_Swivel"/>
</dbReference>
<dbReference type="InterPro" id="IPR050075">
    <property type="entry name" value="LeuD"/>
</dbReference>
<dbReference type="NCBIfam" id="TIGR00171">
    <property type="entry name" value="leuD"/>
    <property type="match status" value="1"/>
</dbReference>
<dbReference type="NCBIfam" id="NF002458">
    <property type="entry name" value="PRK01641.1"/>
    <property type="match status" value="1"/>
</dbReference>
<dbReference type="PANTHER" id="PTHR43345:SF5">
    <property type="entry name" value="3-ISOPROPYLMALATE DEHYDRATASE SMALL SUBUNIT"/>
    <property type="match status" value="1"/>
</dbReference>
<dbReference type="PANTHER" id="PTHR43345">
    <property type="entry name" value="3-ISOPROPYLMALATE DEHYDRATASE SMALL SUBUNIT 2-RELATED-RELATED"/>
    <property type="match status" value="1"/>
</dbReference>
<dbReference type="Pfam" id="PF00694">
    <property type="entry name" value="Aconitase_C"/>
    <property type="match status" value="1"/>
</dbReference>
<dbReference type="SUPFAM" id="SSF52016">
    <property type="entry name" value="LeuD/IlvD-like"/>
    <property type="match status" value="1"/>
</dbReference>
<keyword id="KW-0028">Amino-acid biosynthesis</keyword>
<keyword id="KW-0100">Branched-chain amino acid biosynthesis</keyword>
<keyword id="KW-0432">Leucine biosynthesis</keyword>
<keyword id="KW-0456">Lyase</keyword>
<keyword id="KW-1185">Reference proteome</keyword>
<proteinExistence type="inferred from homology"/>
<feature type="chain" id="PRO_0000141785" description="3-isopropylmalate dehydratase small subunit">
    <location>
        <begin position="1"/>
        <end position="230"/>
    </location>
</feature>
<accession>Q8G4W1</accession>
<evidence type="ECO:0000255" key="1">
    <source>
        <dbReference type="HAMAP-Rule" id="MF_01031"/>
    </source>
</evidence>
<gene>
    <name evidence="1" type="primary">leuD</name>
    <name type="ordered locus">BL1263</name>
</gene>
<comment type="function">
    <text evidence="1">Catalyzes the isomerization between 2-isopropylmalate and 3-isopropylmalate, via the formation of 2-isopropylmaleate.</text>
</comment>
<comment type="catalytic activity">
    <reaction evidence="1">
        <text>(2R,3S)-3-isopropylmalate = (2S)-2-isopropylmalate</text>
        <dbReference type="Rhea" id="RHEA:32287"/>
        <dbReference type="ChEBI" id="CHEBI:1178"/>
        <dbReference type="ChEBI" id="CHEBI:35121"/>
        <dbReference type="EC" id="4.2.1.33"/>
    </reaction>
</comment>
<comment type="pathway">
    <text evidence="1">Amino-acid biosynthesis; L-leucine biosynthesis; L-leucine from 3-methyl-2-oxobutanoate: step 2/4.</text>
</comment>
<comment type="subunit">
    <text evidence="1">Heterodimer of LeuC and LeuD.</text>
</comment>
<comment type="similarity">
    <text evidence="1">Belongs to the LeuD family. LeuD type 1 subfamily.</text>
</comment>
<protein>
    <recommendedName>
        <fullName evidence="1">3-isopropylmalate dehydratase small subunit</fullName>
        <ecNumber evidence="1">4.2.1.33</ecNumber>
    </recommendedName>
    <alternativeName>
        <fullName evidence="1">Alpha-IPM isomerase</fullName>
        <shortName evidence="1">IPMI</shortName>
    </alternativeName>
    <alternativeName>
        <fullName evidence="1">Isopropylmalate isomerase</fullName>
    </alternativeName>
</protein>